<comment type="function">
    <text evidence="1">NDH-1 shuttles electrons from NADH, via FMN and iron-sulfur (Fe-S) centers, to quinones in the respiratory chain. The immediate electron acceptor for the enzyme in this species is believed to be a menaquinone. Couples the redox reaction to proton translocation (for every two electrons transferred, four hydrogen ions are translocated across the cytoplasmic membrane), and thus conserves the redox energy in a proton gradient.</text>
</comment>
<comment type="catalytic activity">
    <reaction evidence="1">
        <text>a quinone + NADH + 5 H(+)(in) = a quinol + NAD(+) + 4 H(+)(out)</text>
        <dbReference type="Rhea" id="RHEA:57888"/>
        <dbReference type="ChEBI" id="CHEBI:15378"/>
        <dbReference type="ChEBI" id="CHEBI:24646"/>
        <dbReference type="ChEBI" id="CHEBI:57540"/>
        <dbReference type="ChEBI" id="CHEBI:57945"/>
        <dbReference type="ChEBI" id="CHEBI:132124"/>
    </reaction>
</comment>
<comment type="cofactor">
    <cofactor evidence="1">
        <name>[4Fe-4S] cluster</name>
        <dbReference type="ChEBI" id="CHEBI:49883"/>
    </cofactor>
    <text evidence="1">Binds 1 [4Fe-4S] cluster.</text>
</comment>
<comment type="subunit">
    <text evidence="1">NDH-1 is composed of 14 different subunits. Subunits NuoB, C, D, E, F, and G constitute the peripheral sector of the complex.</text>
</comment>
<comment type="subcellular location">
    <subcellularLocation>
        <location evidence="1">Cell inner membrane</location>
        <topology evidence="1">Peripheral membrane protein</topology>
        <orientation evidence="1">Cytoplasmic side</orientation>
    </subcellularLocation>
</comment>
<comment type="similarity">
    <text evidence="1">Belongs to the complex I 20 kDa subunit family.</text>
</comment>
<reference key="1">
    <citation type="submission" date="2008-05" db="EMBL/GenBank/DDBJ databases">
        <title>Complete sequence of Chlorobium limicola DSM 245.</title>
        <authorList>
            <consortium name="US DOE Joint Genome Institute"/>
            <person name="Lucas S."/>
            <person name="Copeland A."/>
            <person name="Lapidus A."/>
            <person name="Glavina del Rio T."/>
            <person name="Dalin E."/>
            <person name="Tice H."/>
            <person name="Bruce D."/>
            <person name="Goodwin L."/>
            <person name="Pitluck S."/>
            <person name="Schmutz J."/>
            <person name="Larimer F."/>
            <person name="Land M."/>
            <person name="Hauser L."/>
            <person name="Kyrpides N."/>
            <person name="Ovchinnikova G."/>
            <person name="Zhao F."/>
            <person name="Li T."/>
            <person name="Liu Z."/>
            <person name="Overmann J."/>
            <person name="Bryant D.A."/>
            <person name="Richardson P."/>
        </authorList>
    </citation>
    <scope>NUCLEOTIDE SEQUENCE [LARGE SCALE GENOMIC DNA]</scope>
    <source>
        <strain>DSM 245 / NBRC 103803 / 6330</strain>
    </source>
</reference>
<sequence>MGLLDAGITKHNVVVTSVDNVLNWARLSSLWPMGFGLACCAIEMMATNASNYDLERFGIFPRSSPRQSDLMIVAGTVTMKMAERVVRLYEQMPEPRYVLSMGSCSNCGGPYWEHGYHVLKGVDRVIPVDVYVPGCPPRPESLIGGLMKVQELIRMEQIGLSRADALKKLAEKSIDPQSVIEQHRQVARA</sequence>
<feature type="chain" id="PRO_0000376170" description="NADH-quinone oxidoreductase subunit B">
    <location>
        <begin position="1"/>
        <end position="189"/>
    </location>
</feature>
<feature type="binding site" evidence="1">
    <location>
        <position position="39"/>
    </location>
    <ligand>
        <name>[4Fe-4S] cluster</name>
        <dbReference type="ChEBI" id="CHEBI:49883"/>
    </ligand>
</feature>
<feature type="binding site" evidence="1">
    <location>
        <position position="40"/>
    </location>
    <ligand>
        <name>[4Fe-4S] cluster</name>
        <dbReference type="ChEBI" id="CHEBI:49883"/>
    </ligand>
</feature>
<feature type="binding site" evidence="1">
    <location>
        <position position="104"/>
    </location>
    <ligand>
        <name>[4Fe-4S] cluster</name>
        <dbReference type="ChEBI" id="CHEBI:49883"/>
    </ligand>
</feature>
<feature type="binding site" evidence="1">
    <location>
        <position position="135"/>
    </location>
    <ligand>
        <name>[4Fe-4S] cluster</name>
        <dbReference type="ChEBI" id="CHEBI:49883"/>
    </ligand>
</feature>
<keyword id="KW-0004">4Fe-4S</keyword>
<keyword id="KW-0997">Cell inner membrane</keyword>
<keyword id="KW-1003">Cell membrane</keyword>
<keyword id="KW-0408">Iron</keyword>
<keyword id="KW-0411">Iron-sulfur</keyword>
<keyword id="KW-0472">Membrane</keyword>
<keyword id="KW-0479">Metal-binding</keyword>
<keyword id="KW-0520">NAD</keyword>
<keyword id="KW-0874">Quinone</keyword>
<keyword id="KW-1278">Translocase</keyword>
<keyword id="KW-0813">Transport</keyword>
<gene>
    <name evidence="1" type="primary">nuoB</name>
    <name type="ordered locus">Clim_0845</name>
</gene>
<protein>
    <recommendedName>
        <fullName evidence="1">NADH-quinone oxidoreductase subunit B</fullName>
        <ecNumber evidence="1">7.1.1.-</ecNumber>
    </recommendedName>
    <alternativeName>
        <fullName evidence="1">NADH dehydrogenase I subunit B</fullName>
    </alternativeName>
    <alternativeName>
        <fullName evidence="1">NDH-1 subunit B</fullName>
    </alternativeName>
</protein>
<organism>
    <name type="scientific">Chlorobium limicola (strain DSM 245 / NBRC 103803 / 6330)</name>
    <dbReference type="NCBI Taxonomy" id="290315"/>
    <lineage>
        <taxon>Bacteria</taxon>
        <taxon>Pseudomonadati</taxon>
        <taxon>Chlorobiota</taxon>
        <taxon>Chlorobiia</taxon>
        <taxon>Chlorobiales</taxon>
        <taxon>Chlorobiaceae</taxon>
        <taxon>Chlorobium/Pelodictyon group</taxon>
        <taxon>Chlorobium</taxon>
    </lineage>
</organism>
<evidence type="ECO:0000255" key="1">
    <source>
        <dbReference type="HAMAP-Rule" id="MF_01356"/>
    </source>
</evidence>
<dbReference type="EC" id="7.1.1.-" evidence="1"/>
<dbReference type="EMBL" id="CP001097">
    <property type="protein sequence ID" value="ACD89924.1"/>
    <property type="molecule type" value="Genomic_DNA"/>
</dbReference>
<dbReference type="RefSeq" id="WP_012465803.1">
    <property type="nucleotide sequence ID" value="NC_010803.1"/>
</dbReference>
<dbReference type="SMR" id="B3EI94"/>
<dbReference type="STRING" id="290315.Clim_0845"/>
<dbReference type="KEGG" id="cli:Clim_0845"/>
<dbReference type="eggNOG" id="COG0377">
    <property type="taxonomic scope" value="Bacteria"/>
</dbReference>
<dbReference type="HOGENOM" id="CLU_055737_7_3_10"/>
<dbReference type="OrthoDB" id="9786737at2"/>
<dbReference type="Proteomes" id="UP000008841">
    <property type="component" value="Chromosome"/>
</dbReference>
<dbReference type="GO" id="GO:0005886">
    <property type="term" value="C:plasma membrane"/>
    <property type="evidence" value="ECO:0007669"/>
    <property type="project" value="UniProtKB-SubCell"/>
</dbReference>
<dbReference type="GO" id="GO:0045271">
    <property type="term" value="C:respiratory chain complex I"/>
    <property type="evidence" value="ECO:0007669"/>
    <property type="project" value="TreeGrafter"/>
</dbReference>
<dbReference type="GO" id="GO:0051539">
    <property type="term" value="F:4 iron, 4 sulfur cluster binding"/>
    <property type="evidence" value="ECO:0007669"/>
    <property type="project" value="UniProtKB-KW"/>
</dbReference>
<dbReference type="GO" id="GO:0005506">
    <property type="term" value="F:iron ion binding"/>
    <property type="evidence" value="ECO:0007669"/>
    <property type="project" value="UniProtKB-UniRule"/>
</dbReference>
<dbReference type="GO" id="GO:0008137">
    <property type="term" value="F:NADH dehydrogenase (ubiquinone) activity"/>
    <property type="evidence" value="ECO:0007669"/>
    <property type="project" value="InterPro"/>
</dbReference>
<dbReference type="GO" id="GO:0050136">
    <property type="term" value="F:NADH:ubiquinone reductase (non-electrogenic) activity"/>
    <property type="evidence" value="ECO:0007669"/>
    <property type="project" value="UniProtKB-UniRule"/>
</dbReference>
<dbReference type="GO" id="GO:0048038">
    <property type="term" value="F:quinone binding"/>
    <property type="evidence" value="ECO:0007669"/>
    <property type="project" value="UniProtKB-KW"/>
</dbReference>
<dbReference type="GO" id="GO:0009060">
    <property type="term" value="P:aerobic respiration"/>
    <property type="evidence" value="ECO:0007669"/>
    <property type="project" value="TreeGrafter"/>
</dbReference>
<dbReference type="GO" id="GO:0015990">
    <property type="term" value="P:electron transport coupled proton transport"/>
    <property type="evidence" value="ECO:0007669"/>
    <property type="project" value="TreeGrafter"/>
</dbReference>
<dbReference type="FunFam" id="3.40.50.12280:FF:000002">
    <property type="entry name" value="NADH-quinone oxidoreductase subunit B"/>
    <property type="match status" value="1"/>
</dbReference>
<dbReference type="Gene3D" id="3.40.50.12280">
    <property type="match status" value="1"/>
</dbReference>
<dbReference type="HAMAP" id="MF_01356">
    <property type="entry name" value="NDH1_NuoB"/>
    <property type="match status" value="1"/>
</dbReference>
<dbReference type="InterPro" id="IPR006137">
    <property type="entry name" value="NADH_UbQ_OxRdtase-like_20kDa"/>
</dbReference>
<dbReference type="InterPro" id="IPR006138">
    <property type="entry name" value="NADH_UQ_OxRdtase_20Kd_su"/>
</dbReference>
<dbReference type="NCBIfam" id="TIGR01957">
    <property type="entry name" value="nuoB_fam"/>
    <property type="match status" value="1"/>
</dbReference>
<dbReference type="NCBIfam" id="NF005012">
    <property type="entry name" value="PRK06411.1"/>
    <property type="match status" value="1"/>
</dbReference>
<dbReference type="NCBIfam" id="NF011388">
    <property type="entry name" value="PRK14813.1"/>
    <property type="match status" value="1"/>
</dbReference>
<dbReference type="PANTHER" id="PTHR11995">
    <property type="entry name" value="NADH DEHYDROGENASE"/>
    <property type="match status" value="1"/>
</dbReference>
<dbReference type="PANTHER" id="PTHR11995:SF33">
    <property type="entry name" value="NADH-QUINONE OXIDOREDUCTASE SUBUNIT B 2"/>
    <property type="match status" value="1"/>
</dbReference>
<dbReference type="Pfam" id="PF01058">
    <property type="entry name" value="Oxidored_q6"/>
    <property type="match status" value="1"/>
</dbReference>
<dbReference type="SUPFAM" id="SSF56770">
    <property type="entry name" value="HydA/Nqo6-like"/>
    <property type="match status" value="1"/>
</dbReference>
<dbReference type="PROSITE" id="PS01150">
    <property type="entry name" value="COMPLEX1_20K"/>
    <property type="match status" value="1"/>
</dbReference>
<accession>B3EI94</accession>
<name>NUOB_CHLL2</name>
<proteinExistence type="inferred from homology"/>